<proteinExistence type="inferred from homology"/>
<organism>
    <name type="scientific">Parafrankia sp. (strain EAN1pec)</name>
    <dbReference type="NCBI Taxonomy" id="298653"/>
    <lineage>
        <taxon>Bacteria</taxon>
        <taxon>Bacillati</taxon>
        <taxon>Actinomycetota</taxon>
        <taxon>Actinomycetes</taxon>
        <taxon>Frankiales</taxon>
        <taxon>Frankiaceae</taxon>
        <taxon>Parafrankia</taxon>
    </lineage>
</organism>
<dbReference type="EC" id="3.4.21.88" evidence="1"/>
<dbReference type="EMBL" id="CP000820">
    <property type="protein sequence ID" value="ABW10686.1"/>
    <property type="molecule type" value="Genomic_DNA"/>
</dbReference>
<dbReference type="RefSeq" id="WP_020458861.1">
    <property type="nucleotide sequence ID" value="NC_009921.1"/>
</dbReference>
<dbReference type="SMR" id="A8L6K4"/>
<dbReference type="STRING" id="298653.Franean1_1232"/>
<dbReference type="MEROPS" id="S24.001"/>
<dbReference type="KEGG" id="fre:Franean1_1232"/>
<dbReference type="eggNOG" id="COG1974">
    <property type="taxonomic scope" value="Bacteria"/>
</dbReference>
<dbReference type="HOGENOM" id="CLU_066192_45_0_11"/>
<dbReference type="GO" id="GO:0003677">
    <property type="term" value="F:DNA binding"/>
    <property type="evidence" value="ECO:0007669"/>
    <property type="project" value="UniProtKB-UniRule"/>
</dbReference>
<dbReference type="GO" id="GO:0004252">
    <property type="term" value="F:serine-type endopeptidase activity"/>
    <property type="evidence" value="ECO:0007669"/>
    <property type="project" value="UniProtKB-UniRule"/>
</dbReference>
<dbReference type="GO" id="GO:0006281">
    <property type="term" value="P:DNA repair"/>
    <property type="evidence" value="ECO:0007669"/>
    <property type="project" value="UniProtKB-UniRule"/>
</dbReference>
<dbReference type="GO" id="GO:0006260">
    <property type="term" value="P:DNA replication"/>
    <property type="evidence" value="ECO:0007669"/>
    <property type="project" value="UniProtKB-UniRule"/>
</dbReference>
<dbReference type="GO" id="GO:0045892">
    <property type="term" value="P:negative regulation of DNA-templated transcription"/>
    <property type="evidence" value="ECO:0007669"/>
    <property type="project" value="UniProtKB-UniRule"/>
</dbReference>
<dbReference type="GO" id="GO:0006508">
    <property type="term" value="P:proteolysis"/>
    <property type="evidence" value="ECO:0007669"/>
    <property type="project" value="InterPro"/>
</dbReference>
<dbReference type="GO" id="GO:0009432">
    <property type="term" value="P:SOS response"/>
    <property type="evidence" value="ECO:0007669"/>
    <property type="project" value="UniProtKB-UniRule"/>
</dbReference>
<dbReference type="CDD" id="cd06529">
    <property type="entry name" value="S24_LexA-like"/>
    <property type="match status" value="1"/>
</dbReference>
<dbReference type="FunFam" id="1.10.10.10:FF:000009">
    <property type="entry name" value="LexA repressor"/>
    <property type="match status" value="1"/>
</dbReference>
<dbReference type="FunFam" id="2.10.109.10:FF:000001">
    <property type="entry name" value="LexA repressor"/>
    <property type="match status" value="1"/>
</dbReference>
<dbReference type="Gene3D" id="2.10.109.10">
    <property type="entry name" value="Umud Fragment, subunit A"/>
    <property type="match status" value="1"/>
</dbReference>
<dbReference type="Gene3D" id="1.10.10.10">
    <property type="entry name" value="Winged helix-like DNA-binding domain superfamily/Winged helix DNA-binding domain"/>
    <property type="match status" value="1"/>
</dbReference>
<dbReference type="HAMAP" id="MF_00015">
    <property type="entry name" value="LexA"/>
    <property type="match status" value="1"/>
</dbReference>
<dbReference type="InterPro" id="IPR006200">
    <property type="entry name" value="LexA"/>
</dbReference>
<dbReference type="InterPro" id="IPR039418">
    <property type="entry name" value="LexA-like"/>
</dbReference>
<dbReference type="InterPro" id="IPR036286">
    <property type="entry name" value="LexA/Signal_pep-like_sf"/>
</dbReference>
<dbReference type="InterPro" id="IPR006199">
    <property type="entry name" value="LexA_DNA-bd_dom"/>
</dbReference>
<dbReference type="InterPro" id="IPR050077">
    <property type="entry name" value="LexA_repressor"/>
</dbReference>
<dbReference type="InterPro" id="IPR006197">
    <property type="entry name" value="Peptidase_S24_LexA"/>
</dbReference>
<dbReference type="InterPro" id="IPR015927">
    <property type="entry name" value="Peptidase_S24_S26A/B/C"/>
</dbReference>
<dbReference type="InterPro" id="IPR036388">
    <property type="entry name" value="WH-like_DNA-bd_sf"/>
</dbReference>
<dbReference type="InterPro" id="IPR036390">
    <property type="entry name" value="WH_DNA-bd_sf"/>
</dbReference>
<dbReference type="NCBIfam" id="TIGR00498">
    <property type="entry name" value="lexA"/>
    <property type="match status" value="1"/>
</dbReference>
<dbReference type="PANTHER" id="PTHR33516">
    <property type="entry name" value="LEXA REPRESSOR"/>
    <property type="match status" value="1"/>
</dbReference>
<dbReference type="PANTHER" id="PTHR33516:SF2">
    <property type="entry name" value="LEXA REPRESSOR-RELATED"/>
    <property type="match status" value="1"/>
</dbReference>
<dbReference type="Pfam" id="PF01726">
    <property type="entry name" value="LexA_DNA_bind"/>
    <property type="match status" value="1"/>
</dbReference>
<dbReference type="Pfam" id="PF00717">
    <property type="entry name" value="Peptidase_S24"/>
    <property type="match status" value="1"/>
</dbReference>
<dbReference type="PRINTS" id="PR00726">
    <property type="entry name" value="LEXASERPTASE"/>
</dbReference>
<dbReference type="SUPFAM" id="SSF51306">
    <property type="entry name" value="LexA/Signal peptidase"/>
    <property type="match status" value="1"/>
</dbReference>
<dbReference type="SUPFAM" id="SSF46785">
    <property type="entry name" value="Winged helix' DNA-binding domain"/>
    <property type="match status" value="1"/>
</dbReference>
<feature type="chain" id="PRO_1000089567" description="LexA repressor">
    <location>
        <begin position="1"/>
        <end position="250"/>
    </location>
</feature>
<feature type="DNA-binding region" description="H-T-H motif" evidence="1">
    <location>
        <begin position="54"/>
        <end position="74"/>
    </location>
</feature>
<feature type="region of interest" description="Disordered" evidence="2">
    <location>
        <begin position="1"/>
        <end position="33"/>
    </location>
</feature>
<feature type="compositionally biased region" description="Basic and acidic residues" evidence="2">
    <location>
        <begin position="1"/>
        <end position="21"/>
    </location>
</feature>
<feature type="active site" description="For autocatalytic cleavage activity" evidence="1">
    <location>
        <position position="174"/>
    </location>
</feature>
<feature type="active site" description="For autocatalytic cleavage activity" evidence="1">
    <location>
        <position position="211"/>
    </location>
</feature>
<feature type="site" description="Cleavage; by autolysis" evidence="1">
    <location>
        <begin position="139"/>
        <end position="140"/>
    </location>
</feature>
<keyword id="KW-0068">Autocatalytic cleavage</keyword>
<keyword id="KW-0227">DNA damage</keyword>
<keyword id="KW-0234">DNA repair</keyword>
<keyword id="KW-0235">DNA replication</keyword>
<keyword id="KW-0238">DNA-binding</keyword>
<keyword id="KW-0378">Hydrolase</keyword>
<keyword id="KW-0678">Repressor</keyword>
<keyword id="KW-0742">SOS response</keyword>
<keyword id="KW-0804">Transcription</keyword>
<keyword id="KW-0805">Transcription regulation</keyword>
<reference key="1">
    <citation type="journal article" date="2007" name="Genome Res.">
        <title>Genome characteristics of facultatively symbiotic Frankia sp. strains reflect host range and host plant biogeography.</title>
        <authorList>
            <person name="Normand P."/>
            <person name="Lapierre P."/>
            <person name="Tisa L.S."/>
            <person name="Gogarten J.P."/>
            <person name="Alloisio N."/>
            <person name="Bagnarol E."/>
            <person name="Bassi C.A."/>
            <person name="Berry A.M."/>
            <person name="Bickhart D.M."/>
            <person name="Choisne N."/>
            <person name="Couloux A."/>
            <person name="Cournoyer B."/>
            <person name="Cruveiller S."/>
            <person name="Daubin V."/>
            <person name="Demange N."/>
            <person name="Francino M.P."/>
            <person name="Goltsman E."/>
            <person name="Huang Y."/>
            <person name="Kopp O.R."/>
            <person name="Labarre L."/>
            <person name="Lapidus A."/>
            <person name="Lavire C."/>
            <person name="Marechal J."/>
            <person name="Martinez M."/>
            <person name="Mastronunzio J.E."/>
            <person name="Mullin B.C."/>
            <person name="Niemann J."/>
            <person name="Pujic P."/>
            <person name="Rawnsley T."/>
            <person name="Rouy Z."/>
            <person name="Schenowitz C."/>
            <person name="Sellstedt A."/>
            <person name="Tavares F."/>
            <person name="Tomkins J.P."/>
            <person name="Vallenet D."/>
            <person name="Valverde C."/>
            <person name="Wall L.G."/>
            <person name="Wang Y."/>
            <person name="Medigue C."/>
            <person name="Benson D.R."/>
        </authorList>
    </citation>
    <scope>NUCLEOTIDE SEQUENCE [LARGE SCALE GENOMIC DNA]</scope>
    <source>
        <strain>EAN1pec</strain>
    </source>
</reference>
<gene>
    <name evidence="1" type="primary">lexA</name>
    <name type="ordered locus">Franean1_1232</name>
</gene>
<protein>
    <recommendedName>
        <fullName evidence="1">LexA repressor</fullName>
        <ecNumber evidence="1">3.4.21.88</ecNumber>
    </recommendedName>
</protein>
<name>LEXA_PARS2</name>
<accession>A8L6K4</accession>
<sequence length="250" mass="26601">MTSQERGTRRGDTRGNVRDFPDSPADASGLTQRQKKVLEVIRSAVERRGYPPSVREIGEAVGLTSTSSVAHQLKVLQEKGFLRRDPNRPRAMEVLPIGGAKTGGRSRAGAAAAAGAPAETTALEAGTPTYVPLVGRIAAGGPILAEQAIEDVYPLPKEIVGEGTLFLLKVVGQSMINAAICDGDFVVVRQQPVADNGEIVAAMIDGEATVKRFRQRDGRVWLAPENPAFSDIPAEDATILGRIVAVMRRV</sequence>
<evidence type="ECO:0000255" key="1">
    <source>
        <dbReference type="HAMAP-Rule" id="MF_00015"/>
    </source>
</evidence>
<evidence type="ECO:0000256" key="2">
    <source>
        <dbReference type="SAM" id="MobiDB-lite"/>
    </source>
</evidence>
<comment type="function">
    <text evidence="1">Represses a number of genes involved in the response to DNA damage (SOS response), including recA and lexA. In the presence of single-stranded DNA, RecA interacts with LexA causing an autocatalytic cleavage which disrupts the DNA-binding part of LexA, leading to derepression of the SOS regulon and eventually DNA repair.</text>
</comment>
<comment type="catalytic activity">
    <reaction evidence="1">
        <text>Hydrolysis of Ala-|-Gly bond in repressor LexA.</text>
        <dbReference type="EC" id="3.4.21.88"/>
    </reaction>
</comment>
<comment type="subunit">
    <text evidence="1">Homodimer.</text>
</comment>
<comment type="similarity">
    <text evidence="1">Belongs to the peptidase S24 family.</text>
</comment>